<protein>
    <recommendedName>
        <fullName evidence="2">Methyltransferase pytC</fullName>
        <ecNumber evidence="4">2.1.1.-</ecNumber>
    </recommendedName>
    <alternativeName>
        <fullName evidence="2">Pyranterreones biosynthesis cluster protein C</fullName>
    </alternativeName>
</protein>
<dbReference type="EC" id="2.1.1.-" evidence="4"/>
<dbReference type="EMBL" id="CH476594">
    <property type="protein sequence ID" value="EAU39558.1"/>
    <property type="status" value="ALT_SEQ"/>
    <property type="molecule type" value="Genomic_DNA"/>
</dbReference>
<dbReference type="RefSeq" id="XP_001210998.1">
    <property type="nucleotide sequence ID" value="XM_001210998.1"/>
</dbReference>
<dbReference type="STRING" id="341663.Q0CZH2"/>
<dbReference type="EnsemblFungi" id="EAU39558">
    <property type="protein sequence ID" value="EAU39558"/>
    <property type="gene ID" value="ATEG_00912"/>
</dbReference>
<dbReference type="GeneID" id="4355675"/>
<dbReference type="eggNOG" id="ENOG502QSKG">
    <property type="taxonomic scope" value="Eukaryota"/>
</dbReference>
<dbReference type="HOGENOM" id="CLU_402222_0_0_1"/>
<dbReference type="OrthoDB" id="2013972at2759"/>
<dbReference type="Proteomes" id="UP000007963">
    <property type="component" value="Unassembled WGS sequence"/>
</dbReference>
<dbReference type="GO" id="GO:0008168">
    <property type="term" value="F:methyltransferase activity"/>
    <property type="evidence" value="ECO:0007669"/>
    <property type="project" value="UniProtKB-KW"/>
</dbReference>
<dbReference type="GO" id="GO:0032259">
    <property type="term" value="P:methylation"/>
    <property type="evidence" value="ECO:0007669"/>
    <property type="project" value="UniProtKB-KW"/>
</dbReference>
<dbReference type="CDD" id="cd02440">
    <property type="entry name" value="AdoMet_MTases"/>
    <property type="match status" value="1"/>
</dbReference>
<dbReference type="Gene3D" id="3.40.50.150">
    <property type="entry name" value="Vaccinia Virus protein VP39"/>
    <property type="match status" value="1"/>
</dbReference>
<dbReference type="InterPro" id="IPR029063">
    <property type="entry name" value="SAM-dependent_MTases_sf"/>
</dbReference>
<dbReference type="PANTHER" id="PTHR43591:SF10">
    <property type="entry name" value="ABC TRANSMEMBRANE TYPE-1 DOMAIN-CONTAINING PROTEIN-RELATED"/>
    <property type="match status" value="1"/>
</dbReference>
<dbReference type="PANTHER" id="PTHR43591">
    <property type="entry name" value="METHYLTRANSFERASE"/>
    <property type="match status" value="1"/>
</dbReference>
<dbReference type="Pfam" id="PF13489">
    <property type="entry name" value="Methyltransf_23"/>
    <property type="match status" value="1"/>
</dbReference>
<dbReference type="SUPFAM" id="SSF53335">
    <property type="entry name" value="S-adenosyl-L-methionine-dependent methyltransferases"/>
    <property type="match status" value="1"/>
</dbReference>
<sequence length="324" mass="36767">MTVLTAAEPPNRIEVDMDAPSLDTDSSCTSLSSSVQRYEYKHGRRYHGYHAGSYPFPNDKREQDRLDMIHHVYTRILNDRLFLAPLDPRGKAILDIGTGTGIWALHMGDAHPAARLIVGNDLSPIQPSWAPANVRFVVDDVEKDWVDRHPYDFIHCRYMAGSIKDWPRLIRQCYAHLRPGGWLELQESVNVMYSEDGTLPPDSFMARMMHGLIVACEKSGRTMDPAPSMEKWVQEAGFDPITKHRFKIPVGSWPKDPRLKECGSLMRVNFVEGVEAFTASLFTEVLGWTPEEVAVLNTGVREEAMRNDIHAIFDFVVIVAQKPY</sequence>
<evidence type="ECO:0000269" key="1">
    <source>
    </source>
</evidence>
<evidence type="ECO:0000303" key="2">
    <source>
    </source>
</evidence>
<evidence type="ECO:0000305" key="3"/>
<evidence type="ECO:0000305" key="4">
    <source>
    </source>
</evidence>
<comment type="function">
    <text evidence="1 4">Methyltransferase; part of the gene cluster that mediates the biosynthesis of pyranterreones, a family of antioxidative compounds (PubMed:32077283). The first step of pyranonigrins biosynthesis is performed by the hybrid PKS-NRPS synthetase pytA that condenses 4 malonyl-CoA units ato the acetyl starter unit by the modular PKS of pytA (PubMed:32077283). The acyl chain is then connected to an L-serine through the amide bond by the modular NRPS of pytA (PubMed:32077283). A tetramic acid is formed and released from the PKS-NRPS pytA to give pyranterreone 5 with the help of the thioesterase pytI (PubMed:32077283). Pyranterreone 5 could be methylated by pytC to afford pyranterreone 6 (Probable). Both pyranterreones 5 and 6 are subsequently oxidized by the FAD-linked oxidoreductase pytB and the cytochrome P450 monooxygenase pytD to form the fused gamma-pyrone core, resulting in pyranterreones 7 and 11, respectively (PubMed:32077283). The hydroxy group at C-8 of pyranterreones 7 and 11 are dehydrated by the aspartyl protease pytH to form a delta-7 double bond to give pyranterreones 3 and 1, 2 accordingly (PubMed:32077283). The exo-methylene of pyranterreone 3 could be reduced into a pendant methyl by reductase pytE to provide pyranterreone 4, also known as cordylactam (Probable). Pyranterreone 4 can be reconverted to pyranterreone 3 through pytB-catalyzed dehydrogenation or further oxidized to pyranterreones 9 and 10 (Probable).</text>
</comment>
<comment type="pathway">
    <text evidence="1">Secondary metabolite biosynthesis.</text>
</comment>
<comment type="induction">
    <text evidence="1">Expression is positively regulated by the cluster-specific transcription factor pytR.</text>
</comment>
<comment type="disruption phenotype">
    <text evidence="1">Abolishes the production of most pyranterreones, but accumulates pyranterreone 5.</text>
</comment>
<comment type="similarity">
    <text evidence="3">Belongs to the methyltransferase superfamily. LaeA methyltransferase family.</text>
</comment>
<comment type="sequence caution" evidence="4">
    <conflict type="erroneous gene model prediction">
        <sequence resource="EMBL-CDS" id="EAU39558"/>
    </conflict>
</comment>
<feature type="chain" id="PRO_0000450467" description="Methyltransferase pytC">
    <location>
        <begin position="1"/>
        <end position="324"/>
    </location>
</feature>
<proteinExistence type="evidence at transcript level"/>
<organism>
    <name type="scientific">Aspergillus terreus (strain NIH 2624 / FGSC A1156)</name>
    <dbReference type="NCBI Taxonomy" id="341663"/>
    <lineage>
        <taxon>Eukaryota</taxon>
        <taxon>Fungi</taxon>
        <taxon>Dikarya</taxon>
        <taxon>Ascomycota</taxon>
        <taxon>Pezizomycotina</taxon>
        <taxon>Eurotiomycetes</taxon>
        <taxon>Eurotiomycetidae</taxon>
        <taxon>Eurotiales</taxon>
        <taxon>Aspergillaceae</taxon>
        <taxon>Aspergillus</taxon>
        <taxon>Aspergillus subgen. Circumdati</taxon>
    </lineage>
</organism>
<name>PYTC_ASPTN</name>
<reference key="1">
    <citation type="submission" date="2005-09" db="EMBL/GenBank/DDBJ databases">
        <title>Annotation of the Aspergillus terreus NIH2624 genome.</title>
        <authorList>
            <person name="Birren B.W."/>
            <person name="Lander E.S."/>
            <person name="Galagan J.E."/>
            <person name="Nusbaum C."/>
            <person name="Devon K."/>
            <person name="Henn M."/>
            <person name="Ma L.-J."/>
            <person name="Jaffe D.B."/>
            <person name="Butler J."/>
            <person name="Alvarez P."/>
            <person name="Gnerre S."/>
            <person name="Grabherr M."/>
            <person name="Kleber M."/>
            <person name="Mauceli E.W."/>
            <person name="Brockman W."/>
            <person name="Rounsley S."/>
            <person name="Young S.K."/>
            <person name="LaButti K."/>
            <person name="Pushparaj V."/>
            <person name="DeCaprio D."/>
            <person name="Crawford M."/>
            <person name="Koehrsen M."/>
            <person name="Engels R."/>
            <person name="Montgomery P."/>
            <person name="Pearson M."/>
            <person name="Howarth C."/>
            <person name="Larson L."/>
            <person name="Luoma S."/>
            <person name="White J."/>
            <person name="Alvarado L."/>
            <person name="Kodira C.D."/>
            <person name="Zeng Q."/>
            <person name="Oleary S."/>
            <person name="Yandava C."/>
            <person name="Denning D.W."/>
            <person name="Nierman W.C."/>
            <person name="Milne T."/>
            <person name="Madden K."/>
        </authorList>
    </citation>
    <scope>NUCLEOTIDE SEQUENCE [LARGE SCALE GENOMIC DNA]</scope>
    <source>
        <strain>NIH 2624 / FGSC A1156</strain>
    </source>
</reference>
<reference key="2">
    <citation type="journal article" date="2020" name="J. Nat. Prod.">
        <title>Discovery and characterization of a PKS-NRPS hybrid in Aspergillus terreus by genome mining.</title>
        <authorList>
            <person name="Tang S."/>
            <person name="Zhang W."/>
            <person name="Li Z."/>
            <person name="Li H."/>
            <person name="Geng C."/>
            <person name="Huang X."/>
            <person name="Lu X."/>
        </authorList>
    </citation>
    <scope>INDUCTION</scope>
    <scope>FUNCTION</scope>
    <scope>DISRUPTION PHENOTYPE</scope>
    <scope>PATHWAY</scope>
</reference>
<accession>Q0CZH2</accession>
<gene>
    <name evidence="2" type="primary">pytC</name>
    <name type="ORF">ATEG_00912</name>
</gene>
<keyword id="KW-0489">Methyltransferase</keyword>
<keyword id="KW-1185">Reference proteome</keyword>
<keyword id="KW-0949">S-adenosyl-L-methionine</keyword>
<keyword id="KW-0808">Transferase</keyword>